<proteinExistence type="evidence at protein level"/>
<gene>
    <name evidence="1" type="primary">astE</name>
    <name type="ordered locus">CV_2877</name>
</gene>
<dbReference type="EC" id="3.5.1.96" evidence="1"/>
<dbReference type="EMBL" id="AE016825">
    <property type="protein sequence ID" value="AAQ60545.1"/>
    <property type="molecule type" value="Genomic_DNA"/>
</dbReference>
<dbReference type="RefSeq" id="WP_011136424.1">
    <property type="nucleotide sequence ID" value="NC_005085.1"/>
</dbReference>
<dbReference type="PDB" id="1YW4">
    <property type="method" value="X-ray"/>
    <property type="resolution" value="2.00 A"/>
    <property type="chains" value="A/B=1-333"/>
</dbReference>
<dbReference type="PDBsum" id="1YW4"/>
<dbReference type="SMR" id="Q7NU26"/>
<dbReference type="STRING" id="243365.CV_2877"/>
<dbReference type="KEGG" id="cvi:CV_2877"/>
<dbReference type="eggNOG" id="COG2988">
    <property type="taxonomic scope" value="Bacteria"/>
</dbReference>
<dbReference type="HOGENOM" id="CLU_071608_0_0_4"/>
<dbReference type="OrthoDB" id="5290473at2"/>
<dbReference type="UniPathway" id="UPA00185">
    <property type="reaction ID" value="UER00283"/>
</dbReference>
<dbReference type="EvolutionaryTrace" id="Q7NU26"/>
<dbReference type="Proteomes" id="UP000001424">
    <property type="component" value="Chromosome"/>
</dbReference>
<dbReference type="GO" id="GO:0016788">
    <property type="term" value="F:hydrolase activity, acting on ester bonds"/>
    <property type="evidence" value="ECO:0007669"/>
    <property type="project" value="UniProtKB-UniRule"/>
</dbReference>
<dbReference type="GO" id="GO:0009017">
    <property type="term" value="F:succinylglutamate desuccinylase activity"/>
    <property type="evidence" value="ECO:0007669"/>
    <property type="project" value="UniProtKB-EC"/>
</dbReference>
<dbReference type="GO" id="GO:0008270">
    <property type="term" value="F:zinc ion binding"/>
    <property type="evidence" value="ECO:0007669"/>
    <property type="project" value="UniProtKB-UniRule"/>
</dbReference>
<dbReference type="GO" id="GO:0019544">
    <property type="term" value="P:arginine catabolic process to glutamate"/>
    <property type="evidence" value="ECO:0007669"/>
    <property type="project" value="UniProtKB-UniRule"/>
</dbReference>
<dbReference type="GO" id="GO:0019545">
    <property type="term" value="P:arginine catabolic process to succinate"/>
    <property type="evidence" value="ECO:0007669"/>
    <property type="project" value="UniProtKB-UniRule"/>
</dbReference>
<dbReference type="CDD" id="cd03855">
    <property type="entry name" value="M14_ASTE"/>
    <property type="match status" value="1"/>
</dbReference>
<dbReference type="Gene3D" id="3.40.630.10">
    <property type="entry name" value="Zn peptidases"/>
    <property type="match status" value="1"/>
</dbReference>
<dbReference type="HAMAP" id="MF_00767">
    <property type="entry name" value="Arg_catab_AstE"/>
    <property type="match status" value="1"/>
</dbReference>
<dbReference type="InterPro" id="IPR050178">
    <property type="entry name" value="AspA/AstE_fam"/>
</dbReference>
<dbReference type="InterPro" id="IPR055438">
    <property type="entry name" value="AstE_AspA_cat"/>
</dbReference>
<dbReference type="InterPro" id="IPR007036">
    <property type="entry name" value="Aste_AspA_hybrid_dom"/>
</dbReference>
<dbReference type="InterPro" id="IPR016681">
    <property type="entry name" value="SuccinylGlu_desuccinylase"/>
</dbReference>
<dbReference type="NCBIfam" id="TIGR03242">
    <property type="entry name" value="arg_catab_astE"/>
    <property type="match status" value="1"/>
</dbReference>
<dbReference type="NCBIfam" id="NF003706">
    <property type="entry name" value="PRK05324.1"/>
    <property type="match status" value="1"/>
</dbReference>
<dbReference type="PANTHER" id="PTHR15162">
    <property type="entry name" value="ASPARTOACYLASE"/>
    <property type="match status" value="1"/>
</dbReference>
<dbReference type="PANTHER" id="PTHR15162:SF7">
    <property type="entry name" value="SUCCINYLGLUTAMATE DESUCCINYLASE"/>
    <property type="match status" value="1"/>
</dbReference>
<dbReference type="Pfam" id="PF24827">
    <property type="entry name" value="AstE_AspA_cat"/>
    <property type="match status" value="1"/>
</dbReference>
<dbReference type="Pfam" id="PF04952">
    <property type="entry name" value="AstE_AspA_hybrid"/>
    <property type="match status" value="1"/>
</dbReference>
<dbReference type="PIRSF" id="PIRSF017020">
    <property type="entry name" value="AstE"/>
    <property type="match status" value="1"/>
</dbReference>
<dbReference type="SUPFAM" id="SSF53187">
    <property type="entry name" value="Zn-dependent exopeptidases"/>
    <property type="match status" value="1"/>
</dbReference>
<name>ASTE_CHRVO</name>
<keyword id="KW-0002">3D-structure</keyword>
<keyword id="KW-0056">Arginine metabolism</keyword>
<keyword id="KW-0378">Hydrolase</keyword>
<keyword id="KW-0479">Metal-binding</keyword>
<keyword id="KW-1185">Reference proteome</keyword>
<keyword id="KW-0862">Zinc</keyword>
<evidence type="ECO:0000255" key="1">
    <source>
        <dbReference type="HAMAP-Rule" id="MF_00767"/>
    </source>
</evidence>
<evidence type="ECO:0007829" key="2">
    <source>
        <dbReference type="PDB" id="1YW4"/>
    </source>
</evidence>
<reference key="1">
    <citation type="journal article" date="2003" name="Proc. Natl. Acad. Sci. U.S.A.">
        <title>The complete genome sequence of Chromobacterium violaceum reveals remarkable and exploitable bacterial adaptability.</title>
        <authorList>
            <person name="Vasconcelos A.T.R."/>
            <person name="de Almeida D.F."/>
            <person name="Hungria M."/>
            <person name="Guimaraes C.T."/>
            <person name="Antonio R.V."/>
            <person name="Almeida F.C."/>
            <person name="de Almeida L.G.P."/>
            <person name="de Almeida R."/>
            <person name="Alves-Gomes J.A."/>
            <person name="Andrade E.M."/>
            <person name="Araripe J."/>
            <person name="de Araujo M.F.F."/>
            <person name="Astolfi-Filho S."/>
            <person name="Azevedo V."/>
            <person name="Baptista A.J."/>
            <person name="Bataus L.A.M."/>
            <person name="Batista J.S."/>
            <person name="Belo A."/>
            <person name="van den Berg C."/>
            <person name="Bogo M."/>
            <person name="Bonatto S."/>
            <person name="Bordignon J."/>
            <person name="Brigido M.M."/>
            <person name="Brito C.A."/>
            <person name="Brocchi M."/>
            <person name="Burity H.A."/>
            <person name="Camargo A.A."/>
            <person name="Cardoso D.D.P."/>
            <person name="Carneiro N.P."/>
            <person name="Carraro D.M."/>
            <person name="Carvalho C.M.B."/>
            <person name="Cascardo J.C.M."/>
            <person name="Cavada B.S."/>
            <person name="Chueire L.M.O."/>
            <person name="Creczynski-Pasa T.B."/>
            <person name="Cunha-Junior N.C."/>
            <person name="Fagundes N."/>
            <person name="Falcao C.L."/>
            <person name="Fantinatti F."/>
            <person name="Farias I.P."/>
            <person name="Felipe M.S.S."/>
            <person name="Ferrari L.P."/>
            <person name="Ferro J.A."/>
            <person name="Ferro M.I.T."/>
            <person name="Franco G.R."/>
            <person name="Freitas N.S.A."/>
            <person name="Furlan L.R."/>
            <person name="Gazzinelli R.T."/>
            <person name="Gomes E.A."/>
            <person name="Goncalves P.R."/>
            <person name="Grangeiro T.B."/>
            <person name="Grattapaglia D."/>
            <person name="Grisard E.C."/>
            <person name="Hanna E.S."/>
            <person name="Jardim S.N."/>
            <person name="Laurino J."/>
            <person name="Leoi L.C.T."/>
            <person name="Lima L.F.A."/>
            <person name="Loureiro M.F."/>
            <person name="Lyra M.C.C.P."/>
            <person name="Madeira H.M.F."/>
            <person name="Manfio G.P."/>
            <person name="Maranhao A.Q."/>
            <person name="Martins W.S."/>
            <person name="di Mauro S.M.Z."/>
            <person name="de Medeiros S.R.B."/>
            <person name="Meissner R.V."/>
            <person name="Moreira M.A.M."/>
            <person name="Nascimento F.F."/>
            <person name="Nicolas M.F."/>
            <person name="Oliveira J.G."/>
            <person name="Oliveira S.C."/>
            <person name="Paixao R.F.C."/>
            <person name="Parente J.A."/>
            <person name="Pedrosa F.O."/>
            <person name="Pena S.D.J."/>
            <person name="Pereira J.O."/>
            <person name="Pereira M."/>
            <person name="Pinto L.S.R.C."/>
            <person name="Pinto L.S."/>
            <person name="Porto J.I.R."/>
            <person name="Potrich D.P."/>
            <person name="Ramalho-Neto C.E."/>
            <person name="Reis A.M.M."/>
            <person name="Rigo L.U."/>
            <person name="Rondinelli E."/>
            <person name="Santos E.B.P."/>
            <person name="Santos F.R."/>
            <person name="Schneider M.P.C."/>
            <person name="Seuanez H.N."/>
            <person name="Silva A.M.R."/>
            <person name="da Silva A.L.C."/>
            <person name="Silva D.W."/>
            <person name="Silva R."/>
            <person name="Simoes I.C."/>
            <person name="Simon D."/>
            <person name="Soares C.M.A."/>
            <person name="Soares R.B.A."/>
            <person name="Souza E.M."/>
            <person name="Souza K.R.L."/>
            <person name="Souza R.C."/>
            <person name="Steffens M.B.R."/>
            <person name="Steindel M."/>
            <person name="Teixeira S.R."/>
            <person name="Urmenyi T."/>
            <person name="Vettore A."/>
            <person name="Wassem R."/>
            <person name="Zaha A."/>
            <person name="Simpson A.J.G."/>
        </authorList>
    </citation>
    <scope>NUCLEOTIDE SEQUENCE [LARGE SCALE GENOMIC DNA]</scope>
    <source>
        <strain>ATCC 12472 / DSM 30191 / JCM 1249 / CCUG 213 / NBRC 12614 / NCIMB 9131 / NCTC 9757 / MK</strain>
    </source>
</reference>
<reference key="2">
    <citation type="submission" date="2005-05" db="PDB data bank">
        <title>Crystal structure of the succinylglutamate desuccinylase from Chromobacterium violaceum, Northeast structural genomics target Cvr22.</title>
        <authorList>
            <consortium name="Northeast structural genomics consortium (NESG)"/>
        </authorList>
    </citation>
    <scope>X-RAY CRYSTALLOGRAPHY (2.0 ANGSTROMS) IN COMPLEX WITH ZINC IONS</scope>
</reference>
<comment type="function">
    <text evidence="1">Transforms N(2)-succinylglutamate into succinate and glutamate.</text>
</comment>
<comment type="catalytic activity">
    <reaction evidence="1">
        <text>N-succinyl-L-glutamate + H2O = L-glutamate + succinate</text>
        <dbReference type="Rhea" id="RHEA:15169"/>
        <dbReference type="ChEBI" id="CHEBI:15377"/>
        <dbReference type="ChEBI" id="CHEBI:29985"/>
        <dbReference type="ChEBI" id="CHEBI:30031"/>
        <dbReference type="ChEBI" id="CHEBI:58763"/>
        <dbReference type="EC" id="3.5.1.96"/>
    </reaction>
</comment>
<comment type="cofactor">
    <cofactor>
        <name>Zn(2+)</name>
        <dbReference type="ChEBI" id="CHEBI:29105"/>
    </cofactor>
    <text>Binds 1 zinc ion per subunit.</text>
</comment>
<comment type="pathway">
    <text evidence="1">Amino-acid degradation; L-arginine degradation via AST pathway; L-glutamate and succinate from L-arginine: step 5/5.</text>
</comment>
<comment type="similarity">
    <text evidence="1">Belongs to the AspA/AstE family. Succinylglutamate desuccinylase subfamily.</text>
</comment>
<accession>Q7NU26</accession>
<organism>
    <name type="scientific">Chromobacterium violaceum (strain ATCC 12472 / DSM 30191 / JCM 1249 / CCUG 213 / NBRC 12614 / NCIMB 9131 / NCTC 9757 / MK)</name>
    <dbReference type="NCBI Taxonomy" id="243365"/>
    <lineage>
        <taxon>Bacteria</taxon>
        <taxon>Pseudomonadati</taxon>
        <taxon>Pseudomonadota</taxon>
        <taxon>Betaproteobacteria</taxon>
        <taxon>Neisseriales</taxon>
        <taxon>Chromobacteriaceae</taxon>
        <taxon>Chromobacterium</taxon>
    </lineage>
</organism>
<feature type="chain" id="PRO_0000174638" description="Succinylglutamate desuccinylase">
    <location>
        <begin position="1"/>
        <end position="333"/>
    </location>
</feature>
<feature type="active site" evidence="1">
    <location>
        <position position="214"/>
    </location>
</feature>
<feature type="binding site">
    <location>
        <position position="56"/>
    </location>
    <ligand>
        <name>Zn(2+)</name>
        <dbReference type="ChEBI" id="CHEBI:29105"/>
    </ligand>
</feature>
<feature type="binding site">
    <location>
        <position position="59"/>
    </location>
    <ligand>
        <name>Zn(2+)</name>
        <dbReference type="ChEBI" id="CHEBI:29105"/>
    </ligand>
</feature>
<feature type="binding site">
    <location>
        <position position="149"/>
    </location>
    <ligand>
        <name>Zn(2+)</name>
        <dbReference type="ChEBI" id="CHEBI:29105"/>
    </ligand>
</feature>
<feature type="helix" evidence="2">
    <location>
        <begin position="7"/>
        <end position="12"/>
    </location>
</feature>
<feature type="strand" evidence="2">
    <location>
        <begin position="20"/>
        <end position="23"/>
    </location>
</feature>
<feature type="turn" evidence="2">
    <location>
        <begin position="24"/>
        <end position="26"/>
    </location>
</feature>
<feature type="strand" evidence="2">
    <location>
        <begin position="27"/>
        <end position="33"/>
    </location>
</feature>
<feature type="strand" evidence="2">
    <location>
        <begin position="36"/>
        <end position="40"/>
    </location>
</feature>
<feature type="strand" evidence="2">
    <location>
        <begin position="48"/>
        <end position="53"/>
    </location>
</feature>
<feature type="helix" evidence="2">
    <location>
        <begin position="61"/>
        <end position="74"/>
    </location>
</feature>
<feature type="strand" evidence="2">
    <location>
        <begin position="82"/>
        <end position="88"/>
    </location>
</feature>
<feature type="helix" evidence="2">
    <location>
        <begin position="91"/>
        <end position="96"/>
    </location>
</feature>
<feature type="strand" evidence="2">
    <location>
        <begin position="101"/>
        <end position="103"/>
    </location>
</feature>
<feature type="helix" evidence="2">
    <location>
        <begin position="105"/>
        <end position="107"/>
    </location>
</feature>
<feature type="turn" evidence="2">
    <location>
        <begin position="109"/>
        <end position="111"/>
    </location>
</feature>
<feature type="helix" evidence="2">
    <location>
        <begin position="112"/>
        <end position="115"/>
    </location>
</feature>
<feature type="helix" evidence="2">
    <location>
        <begin position="120"/>
        <end position="137"/>
    </location>
</feature>
<feature type="strand" evidence="2">
    <location>
        <begin position="143"/>
        <end position="153"/>
    </location>
</feature>
<feature type="strand" evidence="2">
    <location>
        <begin position="155"/>
        <end position="163"/>
    </location>
</feature>
<feature type="helix" evidence="2">
    <location>
        <begin position="174"/>
        <end position="181"/>
    </location>
</feature>
<feature type="turn" evidence="2">
    <location>
        <begin position="182"/>
        <end position="184"/>
    </location>
</feature>
<feature type="strand" evidence="2">
    <location>
        <begin position="187"/>
        <end position="190"/>
    </location>
</feature>
<feature type="helix" evidence="2">
    <location>
        <begin position="198"/>
        <end position="205"/>
    </location>
</feature>
<feature type="strand" evidence="2">
    <location>
        <begin position="209"/>
        <end position="217"/>
    </location>
</feature>
<feature type="helix" evidence="2">
    <location>
        <begin position="226"/>
        <end position="229"/>
    </location>
</feature>
<feature type="helix" evidence="2">
    <location>
        <begin position="230"/>
        <end position="241"/>
    </location>
</feature>
<feature type="turn" evidence="2">
    <location>
        <begin position="252"/>
        <end position="254"/>
    </location>
</feature>
<feature type="strand" evidence="2">
    <location>
        <begin position="257"/>
        <end position="265"/>
    </location>
</feature>
<feature type="strand" evidence="2">
    <location>
        <begin position="307"/>
        <end position="310"/>
    </location>
</feature>
<feature type="strand" evidence="2">
    <location>
        <begin position="317"/>
        <end position="328"/>
    </location>
</feature>
<protein>
    <recommendedName>
        <fullName evidence="1">Succinylglutamate desuccinylase</fullName>
        <ecNumber evidence="1">3.5.1.96</ecNumber>
    </recommendedName>
</protein>
<sequence>MTHSPSFLQHALSSSDTRAEWPLPGGLAARWLAPGCVELNGDARGADSVLLSCGVHGNETAPIEVVDGMLTDIAAGQLALNCRLLVMFANLDAIRQGVRYGNYDMNRLFNGAHARHPELPESVRAAELETLAAEFFAGARARKLHYDLHTAIRGSVFEKFAIYPFLHDGRTHKREQLAWLQRCGIEAVLLHTQPANTFSYFTSQYCEADAFTLELGKARPFGQNDLSRFSGIDGALRGLLSNPQANVPDLDEDKLPLFRAKYDLVKHSEAFKLNLADSVENFTLLPDGMLIAEDGAVRYQATGGEERILFPNPAVKPGLRAGIVVEPARLPSR</sequence>